<reference key="1">
    <citation type="submission" date="2002-12" db="EMBL/GenBank/DDBJ databases">
        <title>Complete genome sequence of Vibrio vulnificus CMCP6.</title>
        <authorList>
            <person name="Rhee J.H."/>
            <person name="Kim S.Y."/>
            <person name="Chung S.S."/>
            <person name="Kim J.J."/>
            <person name="Moon Y.H."/>
            <person name="Jeong H."/>
            <person name="Choy H.E."/>
        </authorList>
    </citation>
    <scope>NUCLEOTIDE SEQUENCE [LARGE SCALE GENOMIC DNA]</scope>
    <source>
        <strain>CMCP6</strain>
    </source>
</reference>
<feature type="chain" id="PRO_0000160186" description="Glucosamine-6-phosphate deaminase">
    <location>
        <begin position="1"/>
        <end position="266"/>
    </location>
</feature>
<feature type="active site" description="Proton acceptor; for enolization step" evidence="1">
    <location>
        <position position="72"/>
    </location>
</feature>
<feature type="active site" description="For ring-opening step" evidence="1">
    <location>
        <position position="141"/>
    </location>
</feature>
<feature type="active site" description="Proton acceptor; for ring-opening step" evidence="1">
    <location>
        <position position="143"/>
    </location>
</feature>
<feature type="active site" description="For ring-opening step" evidence="1">
    <location>
        <position position="148"/>
    </location>
</feature>
<feature type="site" description="Part of the allosteric site" evidence="1">
    <location>
        <position position="151"/>
    </location>
</feature>
<feature type="site" description="Part of the allosteric site" evidence="1">
    <location>
        <position position="158"/>
    </location>
</feature>
<feature type="site" description="Part of the allosteric site" evidence="1">
    <location>
        <position position="160"/>
    </location>
</feature>
<feature type="site" description="Part of the allosteric site" evidence="1">
    <location>
        <position position="161"/>
    </location>
</feature>
<feature type="site" description="Part of the allosteric site" evidence="1">
    <location>
        <position position="254"/>
    </location>
</feature>
<accession>Q8D4T9</accession>
<dbReference type="EC" id="3.5.99.6" evidence="1"/>
<dbReference type="EMBL" id="AE016796">
    <property type="protein sequence ID" value="AAO08097.1"/>
    <property type="molecule type" value="Genomic_DNA"/>
</dbReference>
<dbReference type="RefSeq" id="WP_011082093.1">
    <property type="nucleotide sequence ID" value="NC_004460.2"/>
</dbReference>
<dbReference type="SMR" id="Q8D4T9"/>
<dbReference type="GeneID" id="93897296"/>
<dbReference type="KEGG" id="vvu:VV2_1200"/>
<dbReference type="HOGENOM" id="CLU_049611_0_1_6"/>
<dbReference type="UniPathway" id="UPA00629">
    <property type="reaction ID" value="UER00684"/>
</dbReference>
<dbReference type="Proteomes" id="UP000002275">
    <property type="component" value="Chromosome 2"/>
</dbReference>
<dbReference type="GO" id="GO:0005737">
    <property type="term" value="C:cytoplasm"/>
    <property type="evidence" value="ECO:0007669"/>
    <property type="project" value="TreeGrafter"/>
</dbReference>
<dbReference type="GO" id="GO:0004342">
    <property type="term" value="F:glucosamine-6-phosphate deaminase activity"/>
    <property type="evidence" value="ECO:0007669"/>
    <property type="project" value="UniProtKB-UniRule"/>
</dbReference>
<dbReference type="GO" id="GO:0042802">
    <property type="term" value="F:identical protein binding"/>
    <property type="evidence" value="ECO:0007669"/>
    <property type="project" value="TreeGrafter"/>
</dbReference>
<dbReference type="GO" id="GO:0005975">
    <property type="term" value="P:carbohydrate metabolic process"/>
    <property type="evidence" value="ECO:0007669"/>
    <property type="project" value="InterPro"/>
</dbReference>
<dbReference type="GO" id="GO:0006043">
    <property type="term" value="P:glucosamine catabolic process"/>
    <property type="evidence" value="ECO:0007669"/>
    <property type="project" value="TreeGrafter"/>
</dbReference>
<dbReference type="GO" id="GO:0006046">
    <property type="term" value="P:N-acetylglucosamine catabolic process"/>
    <property type="evidence" value="ECO:0007669"/>
    <property type="project" value="TreeGrafter"/>
</dbReference>
<dbReference type="GO" id="GO:0019262">
    <property type="term" value="P:N-acetylneuraminate catabolic process"/>
    <property type="evidence" value="ECO:0007669"/>
    <property type="project" value="UniProtKB-UniRule"/>
</dbReference>
<dbReference type="CDD" id="cd01399">
    <property type="entry name" value="GlcN6P_deaminase"/>
    <property type="match status" value="1"/>
</dbReference>
<dbReference type="FunFam" id="3.40.50.1360:FF:000002">
    <property type="entry name" value="Glucosamine-6-phosphate deaminase"/>
    <property type="match status" value="1"/>
</dbReference>
<dbReference type="Gene3D" id="3.40.50.1360">
    <property type="match status" value="1"/>
</dbReference>
<dbReference type="HAMAP" id="MF_01241">
    <property type="entry name" value="GlcN6P_deamin"/>
    <property type="match status" value="1"/>
</dbReference>
<dbReference type="InterPro" id="IPR006148">
    <property type="entry name" value="Glc/Gal-6P_isomerase"/>
</dbReference>
<dbReference type="InterPro" id="IPR004547">
    <property type="entry name" value="Glucosamine6P_isomerase"/>
</dbReference>
<dbReference type="InterPro" id="IPR018321">
    <property type="entry name" value="Glucosamine6P_isomerase_CS"/>
</dbReference>
<dbReference type="InterPro" id="IPR037171">
    <property type="entry name" value="NagB/RpiA_transferase-like"/>
</dbReference>
<dbReference type="NCBIfam" id="TIGR00502">
    <property type="entry name" value="nagB"/>
    <property type="match status" value="1"/>
</dbReference>
<dbReference type="NCBIfam" id="NF001685">
    <property type="entry name" value="PRK00443.1-5"/>
    <property type="match status" value="1"/>
</dbReference>
<dbReference type="PANTHER" id="PTHR11280">
    <property type="entry name" value="GLUCOSAMINE-6-PHOSPHATE ISOMERASE"/>
    <property type="match status" value="1"/>
</dbReference>
<dbReference type="PANTHER" id="PTHR11280:SF5">
    <property type="entry name" value="GLUCOSAMINE-6-PHOSPHATE ISOMERASE"/>
    <property type="match status" value="1"/>
</dbReference>
<dbReference type="Pfam" id="PF01182">
    <property type="entry name" value="Glucosamine_iso"/>
    <property type="match status" value="1"/>
</dbReference>
<dbReference type="SUPFAM" id="SSF100950">
    <property type="entry name" value="NagB/RpiA/CoA transferase-like"/>
    <property type="match status" value="1"/>
</dbReference>
<dbReference type="PROSITE" id="PS01161">
    <property type="entry name" value="GLC_GALNAC_ISOMERASE"/>
    <property type="match status" value="1"/>
</dbReference>
<name>NAGB_VIBVU</name>
<evidence type="ECO:0000255" key="1">
    <source>
        <dbReference type="HAMAP-Rule" id="MF_01241"/>
    </source>
</evidence>
<protein>
    <recommendedName>
        <fullName evidence="1">Glucosamine-6-phosphate deaminase</fullName>
        <ecNumber evidence="1">3.5.99.6</ecNumber>
    </recommendedName>
    <alternativeName>
        <fullName evidence="1">GlcN6P deaminase</fullName>
        <shortName evidence="1">GNPDA</shortName>
    </alternativeName>
    <alternativeName>
        <fullName evidence="1">Glucosamine-6-phosphate isomerase</fullName>
    </alternativeName>
</protein>
<keyword id="KW-0021">Allosteric enzyme</keyword>
<keyword id="KW-0119">Carbohydrate metabolism</keyword>
<keyword id="KW-0378">Hydrolase</keyword>
<comment type="function">
    <text evidence="1">Catalyzes the reversible isomerization-deamination of glucosamine 6-phosphate (GlcN6P) to form fructose 6-phosphate (Fru6P) and ammonium ion.</text>
</comment>
<comment type="catalytic activity">
    <reaction evidence="1">
        <text>alpha-D-glucosamine 6-phosphate + H2O = beta-D-fructose 6-phosphate + NH4(+)</text>
        <dbReference type="Rhea" id="RHEA:12172"/>
        <dbReference type="ChEBI" id="CHEBI:15377"/>
        <dbReference type="ChEBI" id="CHEBI:28938"/>
        <dbReference type="ChEBI" id="CHEBI:57634"/>
        <dbReference type="ChEBI" id="CHEBI:75989"/>
        <dbReference type="EC" id="3.5.99.6"/>
    </reaction>
</comment>
<comment type="activity regulation">
    <text evidence="1">Allosterically activated by N-acetylglucosamine 6-phosphate (GlcNAc6P).</text>
</comment>
<comment type="pathway">
    <text evidence="1">Amino-sugar metabolism; N-acetylneuraminate degradation; D-fructose 6-phosphate from N-acetylneuraminate: step 5/5.</text>
</comment>
<comment type="subunit">
    <text evidence="1">Homohexamer.</text>
</comment>
<comment type="similarity">
    <text evidence="1">Belongs to the glucosamine/galactosamine-6-phosphate isomerase family. NagB subfamily.</text>
</comment>
<sequence>MRLIPLKTAAQVGKWAAAHIAKRINDFQPTAERPFVLGLPTGGTPLATYKALIELYQEGKVSFKHVVTFNMDEYVGISADHPESYRSFMYNNFFNHIDIQEENINLLNGNAEDHEAECQRYEDKIKSYGRINLFMGGVGNDGHIAFNEPASSLSSRTRIKTLTEDTRIANSRFFDGDINQVPKYALTIGVGTLLDSQEIMILVTGHNKALALEAAVEGSVNHLWTVSALQLHPKSVIVCDEPSTQELKVKTVKYFTELEAKNIVGF</sequence>
<proteinExistence type="inferred from homology"/>
<organism>
    <name type="scientific">Vibrio vulnificus (strain CMCP6)</name>
    <dbReference type="NCBI Taxonomy" id="216895"/>
    <lineage>
        <taxon>Bacteria</taxon>
        <taxon>Pseudomonadati</taxon>
        <taxon>Pseudomonadota</taxon>
        <taxon>Gammaproteobacteria</taxon>
        <taxon>Vibrionales</taxon>
        <taxon>Vibrionaceae</taxon>
        <taxon>Vibrio</taxon>
    </lineage>
</organism>
<gene>
    <name evidence="1" type="primary">nagB</name>
    <name type="ordered locus">VV2_1200</name>
</gene>